<proteinExistence type="inferred from homology"/>
<gene>
    <name evidence="1" type="primary">truA</name>
    <name type="ordered locus">OTT_0928</name>
</gene>
<dbReference type="EC" id="5.4.99.12" evidence="1"/>
<dbReference type="EMBL" id="AP008981">
    <property type="protein sequence ID" value="BAG40386.1"/>
    <property type="molecule type" value="Genomic_DNA"/>
</dbReference>
<dbReference type="RefSeq" id="WP_012461513.1">
    <property type="nucleotide sequence ID" value="NC_010793.1"/>
</dbReference>
<dbReference type="SMR" id="B3CSN9"/>
<dbReference type="KEGG" id="ott:OTT_0928"/>
<dbReference type="HOGENOM" id="CLU_014673_0_2_5"/>
<dbReference type="OrthoDB" id="9811823at2"/>
<dbReference type="Proteomes" id="UP000001033">
    <property type="component" value="Chromosome"/>
</dbReference>
<dbReference type="GO" id="GO:0003723">
    <property type="term" value="F:RNA binding"/>
    <property type="evidence" value="ECO:0007669"/>
    <property type="project" value="InterPro"/>
</dbReference>
<dbReference type="GO" id="GO:0160147">
    <property type="term" value="F:tRNA pseudouridine(38-40) synthase activity"/>
    <property type="evidence" value="ECO:0007669"/>
    <property type="project" value="UniProtKB-EC"/>
</dbReference>
<dbReference type="GO" id="GO:0031119">
    <property type="term" value="P:tRNA pseudouridine synthesis"/>
    <property type="evidence" value="ECO:0007669"/>
    <property type="project" value="UniProtKB-UniRule"/>
</dbReference>
<dbReference type="CDD" id="cd02570">
    <property type="entry name" value="PseudoU_synth_EcTruA"/>
    <property type="match status" value="1"/>
</dbReference>
<dbReference type="Gene3D" id="3.30.70.660">
    <property type="entry name" value="Pseudouridine synthase I, catalytic domain, C-terminal subdomain"/>
    <property type="match status" value="1"/>
</dbReference>
<dbReference type="Gene3D" id="3.30.70.580">
    <property type="entry name" value="Pseudouridine synthase I, catalytic domain, N-terminal subdomain"/>
    <property type="match status" value="1"/>
</dbReference>
<dbReference type="HAMAP" id="MF_00171">
    <property type="entry name" value="TruA"/>
    <property type="match status" value="1"/>
</dbReference>
<dbReference type="InterPro" id="IPR020103">
    <property type="entry name" value="PsdUridine_synth_cat_dom_sf"/>
</dbReference>
<dbReference type="InterPro" id="IPR001406">
    <property type="entry name" value="PsdUridine_synth_TruA"/>
</dbReference>
<dbReference type="InterPro" id="IPR020097">
    <property type="entry name" value="PsdUridine_synth_TruA_a/b_dom"/>
</dbReference>
<dbReference type="InterPro" id="IPR020095">
    <property type="entry name" value="PsdUridine_synth_TruA_C"/>
</dbReference>
<dbReference type="InterPro" id="IPR020094">
    <property type="entry name" value="TruA/RsuA/RluB/E/F_N"/>
</dbReference>
<dbReference type="NCBIfam" id="TIGR00071">
    <property type="entry name" value="hisT_truA"/>
    <property type="match status" value="1"/>
</dbReference>
<dbReference type="PANTHER" id="PTHR11142">
    <property type="entry name" value="PSEUDOURIDYLATE SYNTHASE"/>
    <property type="match status" value="1"/>
</dbReference>
<dbReference type="PANTHER" id="PTHR11142:SF0">
    <property type="entry name" value="TRNA PSEUDOURIDINE SYNTHASE-LIKE 1"/>
    <property type="match status" value="1"/>
</dbReference>
<dbReference type="Pfam" id="PF01416">
    <property type="entry name" value="PseudoU_synth_1"/>
    <property type="match status" value="2"/>
</dbReference>
<dbReference type="PIRSF" id="PIRSF001430">
    <property type="entry name" value="tRNA_psdUrid_synth"/>
    <property type="match status" value="1"/>
</dbReference>
<dbReference type="SUPFAM" id="SSF55120">
    <property type="entry name" value="Pseudouridine synthase"/>
    <property type="match status" value="1"/>
</dbReference>
<reference key="1">
    <citation type="journal article" date="2008" name="DNA Res.">
        <title>The whole-genome sequencing of the obligate intracellular bacterium Orientia tsutsugamushi revealed massive gene amplification during reductive genome evolution.</title>
        <authorList>
            <person name="Nakayama K."/>
            <person name="Yamashita A."/>
            <person name="Kurokawa K."/>
            <person name="Morimoto T."/>
            <person name="Ogawa M."/>
            <person name="Fukuhara M."/>
            <person name="Urakami H."/>
            <person name="Ohnishi M."/>
            <person name="Uchiyama I."/>
            <person name="Ogura Y."/>
            <person name="Ooka T."/>
            <person name="Oshima K."/>
            <person name="Tamura A."/>
            <person name="Hattori M."/>
            <person name="Hayashi T."/>
        </authorList>
    </citation>
    <scope>NUCLEOTIDE SEQUENCE [LARGE SCALE GENOMIC DNA]</scope>
    <source>
        <strain>Ikeda</strain>
    </source>
</reference>
<accession>B3CSN9</accession>
<organism>
    <name type="scientific">Orientia tsutsugamushi (strain Ikeda)</name>
    <name type="common">Rickettsia tsutsugamushi</name>
    <dbReference type="NCBI Taxonomy" id="334380"/>
    <lineage>
        <taxon>Bacteria</taxon>
        <taxon>Pseudomonadati</taxon>
        <taxon>Pseudomonadota</taxon>
        <taxon>Alphaproteobacteria</taxon>
        <taxon>Rickettsiales</taxon>
        <taxon>Rickettsiaceae</taxon>
        <taxon>Rickettsieae</taxon>
        <taxon>Orientia</taxon>
    </lineage>
</organism>
<feature type="chain" id="PRO_1000097767" description="tRNA pseudouridine synthase A">
    <location>
        <begin position="1"/>
        <end position="283"/>
    </location>
</feature>
<feature type="active site" description="Nucleophile" evidence="1">
    <location>
        <position position="52"/>
    </location>
</feature>
<feature type="binding site" evidence="1">
    <location>
        <position position="148"/>
    </location>
    <ligand>
        <name>substrate</name>
    </ligand>
</feature>
<sequence length="283" mass="31989">MLRYKAIVEYDGTNFVGWQRQQNGLSIQQLLEDKISTFTKQTVNLIAAGRTDAGVHALGQVVHFDLISPNNSKDLACINKETDNKEVSKQNNTTTTIDSLKMLPCRYNAYKLMSAVNYLLKPHRIILTSCEITTLQFHARFSAKARHYKYRIINRAVPSVIEQNRTWWIKTPLNVIDMIDASQHLIGKHDFTSFRSSACQAKSPLKTLTKIEVDTTNYPEIQIYFSAPSFLHHMVRNIVGTLVYIGLCKISPAAIKTILFAKNRAMAGPTAPSSGLYFVKVDY</sequence>
<comment type="function">
    <text evidence="1">Formation of pseudouridine at positions 38, 39 and 40 in the anticodon stem and loop of transfer RNAs.</text>
</comment>
<comment type="catalytic activity">
    <reaction evidence="1">
        <text>uridine(38/39/40) in tRNA = pseudouridine(38/39/40) in tRNA</text>
        <dbReference type="Rhea" id="RHEA:22376"/>
        <dbReference type="Rhea" id="RHEA-COMP:10085"/>
        <dbReference type="Rhea" id="RHEA-COMP:10087"/>
        <dbReference type="ChEBI" id="CHEBI:65314"/>
        <dbReference type="ChEBI" id="CHEBI:65315"/>
        <dbReference type="EC" id="5.4.99.12"/>
    </reaction>
</comment>
<comment type="subunit">
    <text evidence="1">Homodimer.</text>
</comment>
<comment type="similarity">
    <text evidence="1">Belongs to the tRNA pseudouridine synthase TruA family.</text>
</comment>
<name>TRUA_ORITI</name>
<evidence type="ECO:0000255" key="1">
    <source>
        <dbReference type="HAMAP-Rule" id="MF_00171"/>
    </source>
</evidence>
<protein>
    <recommendedName>
        <fullName evidence="1">tRNA pseudouridine synthase A</fullName>
        <ecNumber evidence="1">5.4.99.12</ecNumber>
    </recommendedName>
    <alternativeName>
        <fullName evidence="1">tRNA pseudouridine(38-40) synthase</fullName>
    </alternativeName>
    <alternativeName>
        <fullName evidence="1">tRNA pseudouridylate synthase I</fullName>
    </alternativeName>
    <alternativeName>
        <fullName evidence="1">tRNA-uridine isomerase I</fullName>
    </alternativeName>
</protein>
<keyword id="KW-0413">Isomerase</keyword>
<keyword id="KW-0819">tRNA processing</keyword>